<name>FIXA_ECODH</name>
<proteinExistence type="inferred from homology"/>
<organism>
    <name type="scientific">Escherichia coli (strain K12 / DH10B)</name>
    <dbReference type="NCBI Taxonomy" id="316385"/>
    <lineage>
        <taxon>Bacteria</taxon>
        <taxon>Pseudomonadati</taxon>
        <taxon>Pseudomonadota</taxon>
        <taxon>Gammaproteobacteria</taxon>
        <taxon>Enterobacterales</taxon>
        <taxon>Enterobacteriaceae</taxon>
        <taxon>Escherichia</taxon>
    </lineage>
</organism>
<comment type="function">
    <text evidence="1">Required for anaerobic carnitine reduction. May bring reductant to CaiA.</text>
</comment>
<comment type="pathway">
    <text evidence="1">Amine and polyamine metabolism; carnitine metabolism.</text>
</comment>
<comment type="subunit">
    <text evidence="1">Heterodimer of FixA and FixB.</text>
</comment>
<comment type="similarity">
    <text evidence="1">Belongs to the ETF beta-subunit/FixA family.</text>
</comment>
<sequence>MKIITCYKCVPDEQDIAVNNADGSLDFSKADAKISQYDLNAIEAACQLKQQAAEAQVTALSVGGKALTNAKGRKDVLSRGPDELIVVIDDQFEQALPQQTASALAAAAQKAGFDLILCGDGSSDLYAQQVGLLVGEILNIPAVNGVSKIISLTADTLTVERELEDETETLSIPLPAVVAVSTDINSPQIPSMKAILGAAKKPVQVWSAADIGFNAEAAWSEQQVAAPKQRERQRIVIEGDGEEQIAAFAENLRKVI</sequence>
<accession>B1XBG6</accession>
<gene>
    <name evidence="1" type="primary">fixA</name>
    <name type="ordered locus">ECDH10B_0042</name>
</gene>
<dbReference type="EMBL" id="CP000948">
    <property type="protein sequence ID" value="ACB01246.1"/>
    <property type="molecule type" value="Genomic_DNA"/>
</dbReference>
<dbReference type="RefSeq" id="WP_000692204.1">
    <property type="nucleotide sequence ID" value="NC_010473.1"/>
</dbReference>
<dbReference type="SMR" id="B1XBG6"/>
<dbReference type="KEGG" id="ecd:ECDH10B_0042"/>
<dbReference type="HOGENOM" id="CLU_060196_2_2_6"/>
<dbReference type="UniPathway" id="UPA00117"/>
<dbReference type="GO" id="GO:0009055">
    <property type="term" value="F:electron transfer activity"/>
    <property type="evidence" value="ECO:0007669"/>
    <property type="project" value="InterPro"/>
</dbReference>
<dbReference type="GO" id="GO:0009437">
    <property type="term" value="P:carnitine metabolic process"/>
    <property type="evidence" value="ECO:0007669"/>
    <property type="project" value="UniProtKB-UniRule"/>
</dbReference>
<dbReference type="CDD" id="cd01714">
    <property type="entry name" value="ETF_beta"/>
    <property type="match status" value="1"/>
</dbReference>
<dbReference type="FunFam" id="3.40.50.620:FF:000072">
    <property type="entry name" value="Protein FixA homolog"/>
    <property type="match status" value="1"/>
</dbReference>
<dbReference type="Gene3D" id="3.40.50.620">
    <property type="entry name" value="HUPs"/>
    <property type="match status" value="1"/>
</dbReference>
<dbReference type="HAMAP" id="MF_01055">
    <property type="entry name" value="FixA"/>
    <property type="match status" value="1"/>
</dbReference>
<dbReference type="InterPro" id="IPR000049">
    <property type="entry name" value="ET-Flavoprotein_bsu_CS"/>
</dbReference>
<dbReference type="InterPro" id="IPR014730">
    <property type="entry name" value="ETF_a/b_N"/>
</dbReference>
<dbReference type="InterPro" id="IPR012255">
    <property type="entry name" value="ETF_b"/>
</dbReference>
<dbReference type="InterPro" id="IPR033948">
    <property type="entry name" value="ETF_beta_N"/>
</dbReference>
<dbReference type="InterPro" id="IPR023463">
    <property type="entry name" value="FixA"/>
</dbReference>
<dbReference type="InterPro" id="IPR014729">
    <property type="entry name" value="Rossmann-like_a/b/a_fold"/>
</dbReference>
<dbReference type="NCBIfam" id="NF002888">
    <property type="entry name" value="PRK03359.1"/>
    <property type="match status" value="1"/>
</dbReference>
<dbReference type="PANTHER" id="PTHR21294">
    <property type="entry name" value="ELECTRON TRANSFER FLAVOPROTEIN BETA-SUBUNIT"/>
    <property type="match status" value="1"/>
</dbReference>
<dbReference type="PANTHER" id="PTHR21294:SF17">
    <property type="entry name" value="PROTEIN FIXA"/>
    <property type="match status" value="1"/>
</dbReference>
<dbReference type="Pfam" id="PF01012">
    <property type="entry name" value="ETF"/>
    <property type="match status" value="1"/>
</dbReference>
<dbReference type="PIRSF" id="PIRSF000090">
    <property type="entry name" value="Beta-ETF"/>
    <property type="match status" value="1"/>
</dbReference>
<dbReference type="SMART" id="SM00893">
    <property type="entry name" value="ETF"/>
    <property type="match status" value="1"/>
</dbReference>
<dbReference type="SUPFAM" id="SSF52402">
    <property type="entry name" value="Adenine nucleotide alpha hydrolases-like"/>
    <property type="match status" value="1"/>
</dbReference>
<dbReference type="PROSITE" id="PS01065">
    <property type="entry name" value="ETF_BETA"/>
    <property type="match status" value="1"/>
</dbReference>
<protein>
    <recommendedName>
        <fullName evidence="1">Protein FixA</fullName>
    </recommendedName>
</protein>
<keyword id="KW-0249">Electron transport</keyword>
<keyword id="KW-0813">Transport</keyword>
<feature type="chain" id="PRO_1000136317" description="Protein FixA">
    <location>
        <begin position="1"/>
        <end position="256"/>
    </location>
</feature>
<reference key="1">
    <citation type="journal article" date="2008" name="J. Bacteriol.">
        <title>The complete genome sequence of Escherichia coli DH10B: insights into the biology of a laboratory workhorse.</title>
        <authorList>
            <person name="Durfee T."/>
            <person name="Nelson R."/>
            <person name="Baldwin S."/>
            <person name="Plunkett G. III"/>
            <person name="Burland V."/>
            <person name="Mau B."/>
            <person name="Petrosino J.F."/>
            <person name="Qin X."/>
            <person name="Muzny D.M."/>
            <person name="Ayele M."/>
            <person name="Gibbs R.A."/>
            <person name="Csorgo B."/>
            <person name="Posfai G."/>
            <person name="Weinstock G.M."/>
            <person name="Blattner F.R."/>
        </authorList>
    </citation>
    <scope>NUCLEOTIDE SEQUENCE [LARGE SCALE GENOMIC DNA]</scope>
    <source>
        <strain>K12 / DH10B</strain>
    </source>
</reference>
<evidence type="ECO:0000255" key="1">
    <source>
        <dbReference type="HAMAP-Rule" id="MF_01055"/>
    </source>
</evidence>